<name>MATP_ECOBW</name>
<protein>
    <recommendedName>
        <fullName evidence="1">Macrodomain Ter protein</fullName>
    </recommendedName>
</protein>
<feature type="chain" id="PRO_1000213478" description="Macrodomain Ter protein">
    <location>
        <begin position="1"/>
        <end position="150"/>
    </location>
</feature>
<accession>C4ZQ82</accession>
<sequence length="150" mass="17693">MKYQQLENLESGWKWKYLVKKHREGELITRYIEASAAQEAVDVLLSLENEPVLVNGWIDKHMNPELVNRMKQTIRARRKRHFNAEHQHTRKKSIDLEFIVWQRLAGLAQRRGKTLSETIVQLIEDAENKEKYANKMSSLKQDLQALLGKE</sequence>
<dbReference type="EMBL" id="CP001396">
    <property type="protein sequence ID" value="ACR62455.1"/>
    <property type="molecule type" value="Genomic_DNA"/>
</dbReference>
<dbReference type="RefSeq" id="WP_000877161.1">
    <property type="nucleotide sequence ID" value="NC_012759.1"/>
</dbReference>
<dbReference type="SMR" id="C4ZQ82"/>
<dbReference type="GeneID" id="93776458"/>
<dbReference type="KEGG" id="ebw:BWG_0808"/>
<dbReference type="HOGENOM" id="CLU_142157_0_0_6"/>
<dbReference type="GO" id="GO:0005737">
    <property type="term" value="C:cytoplasm"/>
    <property type="evidence" value="ECO:0007669"/>
    <property type="project" value="UniProtKB-SubCell"/>
</dbReference>
<dbReference type="GO" id="GO:0043565">
    <property type="term" value="F:sequence-specific DNA binding"/>
    <property type="evidence" value="ECO:0007669"/>
    <property type="project" value="UniProtKB-UniRule"/>
</dbReference>
<dbReference type="GO" id="GO:0051301">
    <property type="term" value="P:cell division"/>
    <property type="evidence" value="ECO:0007669"/>
    <property type="project" value="UniProtKB-UniRule"/>
</dbReference>
<dbReference type="GO" id="GO:0006355">
    <property type="term" value="P:regulation of DNA-templated transcription"/>
    <property type="evidence" value="ECO:0007669"/>
    <property type="project" value="InterPro"/>
</dbReference>
<dbReference type="FunFam" id="1.10.1220.10:FF:000004">
    <property type="entry name" value="Macrodomain Ter protein"/>
    <property type="match status" value="1"/>
</dbReference>
<dbReference type="FunFam" id="1.20.1270.380:FF:000001">
    <property type="entry name" value="Macrodomain Ter protein"/>
    <property type="match status" value="1"/>
</dbReference>
<dbReference type="Gene3D" id="1.20.1270.380">
    <property type="entry name" value="MatP, N-terminal domain"/>
    <property type="match status" value="1"/>
</dbReference>
<dbReference type="Gene3D" id="1.10.1220.10">
    <property type="entry name" value="Met repressor-like"/>
    <property type="match status" value="1"/>
</dbReference>
<dbReference type="HAMAP" id="MF_01073">
    <property type="entry name" value="MatP"/>
    <property type="match status" value="1"/>
</dbReference>
<dbReference type="InterPro" id="IPR013321">
    <property type="entry name" value="Arc_rbn_hlx_hlx"/>
</dbReference>
<dbReference type="InterPro" id="IPR009390">
    <property type="entry name" value="MatP"/>
</dbReference>
<dbReference type="InterPro" id="IPR035375">
    <property type="entry name" value="MatP_C"/>
</dbReference>
<dbReference type="InterPro" id="IPR035087">
    <property type="entry name" value="MatP_N"/>
</dbReference>
<dbReference type="InterPro" id="IPR038339">
    <property type="entry name" value="MatP_N_sf"/>
</dbReference>
<dbReference type="NCBIfam" id="NF003471">
    <property type="entry name" value="PRK05097.1"/>
    <property type="match status" value="1"/>
</dbReference>
<dbReference type="Pfam" id="PF06303">
    <property type="entry name" value="MatP"/>
    <property type="match status" value="1"/>
</dbReference>
<dbReference type="Pfam" id="PF17414">
    <property type="entry name" value="MatP_C"/>
    <property type="match status" value="1"/>
</dbReference>
<keyword id="KW-0131">Cell cycle</keyword>
<keyword id="KW-0132">Cell division</keyword>
<keyword id="KW-0963">Cytoplasm</keyword>
<keyword id="KW-0238">DNA-binding</keyword>
<reference key="1">
    <citation type="journal article" date="2009" name="J. Bacteriol.">
        <title>Genomic sequencing reveals regulatory mutations and recombinational events in the widely used MC4100 lineage of Escherichia coli K-12.</title>
        <authorList>
            <person name="Ferenci T."/>
            <person name="Zhou Z."/>
            <person name="Betteridge T."/>
            <person name="Ren Y."/>
            <person name="Liu Y."/>
            <person name="Feng L."/>
            <person name="Reeves P.R."/>
            <person name="Wang L."/>
        </authorList>
    </citation>
    <scope>NUCLEOTIDE SEQUENCE [LARGE SCALE GENOMIC DNA]</scope>
    <source>
        <strain>K12 / MC4100 / BW2952</strain>
    </source>
</reference>
<gene>
    <name evidence="1" type="primary">matP</name>
    <name type="ordered locus">BWG_0808</name>
</gene>
<organism>
    <name type="scientific">Escherichia coli (strain K12 / MC4100 / BW2952)</name>
    <dbReference type="NCBI Taxonomy" id="595496"/>
    <lineage>
        <taxon>Bacteria</taxon>
        <taxon>Pseudomonadati</taxon>
        <taxon>Pseudomonadota</taxon>
        <taxon>Gammaproteobacteria</taxon>
        <taxon>Enterobacterales</taxon>
        <taxon>Enterobacteriaceae</taxon>
        <taxon>Escherichia</taxon>
    </lineage>
</organism>
<comment type="function">
    <text evidence="1">Required for spatial organization of the terminus region of the chromosome (Ter macrodomain) during the cell cycle. Prevents early segregation of duplicated Ter macrodomains during cell division. Binds specifically to matS, which is a 13 bp signature motif repeated within the Ter macrodomain.</text>
</comment>
<comment type="subunit">
    <text evidence="1">Homodimer.</text>
</comment>
<comment type="subcellular location">
    <subcellularLocation>
        <location evidence="1">Cytoplasm</location>
    </subcellularLocation>
</comment>
<comment type="similarity">
    <text evidence="1">Belongs to the MatP family.</text>
</comment>
<evidence type="ECO:0000255" key="1">
    <source>
        <dbReference type="HAMAP-Rule" id="MF_01073"/>
    </source>
</evidence>
<proteinExistence type="inferred from homology"/>